<evidence type="ECO:0000255" key="1">
    <source>
        <dbReference type="HAMAP-Rule" id="MF_04029"/>
    </source>
</evidence>
<evidence type="ECO:0000256" key="2">
    <source>
        <dbReference type="SAM" id="MobiDB-lite"/>
    </source>
</evidence>
<protein>
    <recommendedName>
        <fullName evidence="1">Thymidine kinase</fullName>
        <ecNumber evidence="1">2.7.1.21</ecNumber>
    </recommendedName>
</protein>
<dbReference type="EC" id="2.7.1.21" evidence="1"/>
<dbReference type="EMBL" id="AF148805">
    <property type="protein sequence ID" value="ABD28872.1"/>
    <property type="molecule type" value="Genomic_DNA"/>
</dbReference>
<dbReference type="RefSeq" id="YP_001129374.1">
    <property type="nucleotide sequence ID" value="NC_009333.1"/>
</dbReference>
<dbReference type="BioGRID" id="1776987">
    <property type="interactions" value="37"/>
</dbReference>
<dbReference type="DNASU" id="4961484"/>
<dbReference type="GeneID" id="4961484"/>
<dbReference type="KEGG" id="vg:4961484"/>
<dbReference type="Proteomes" id="UP000000942">
    <property type="component" value="Segment"/>
</dbReference>
<dbReference type="GO" id="GO:0019033">
    <property type="term" value="C:viral tegument"/>
    <property type="evidence" value="ECO:0000314"/>
    <property type="project" value="CACAO"/>
</dbReference>
<dbReference type="GO" id="GO:0005524">
    <property type="term" value="F:ATP binding"/>
    <property type="evidence" value="ECO:0007669"/>
    <property type="project" value="UniProtKB-KW"/>
</dbReference>
<dbReference type="GO" id="GO:0004797">
    <property type="term" value="F:thymidine kinase activity"/>
    <property type="evidence" value="ECO:0007669"/>
    <property type="project" value="UniProtKB-EC"/>
</dbReference>
<dbReference type="GO" id="GO:0071897">
    <property type="term" value="P:DNA biosynthetic process"/>
    <property type="evidence" value="ECO:0007669"/>
    <property type="project" value="UniProtKB-KW"/>
</dbReference>
<dbReference type="GO" id="GO:0006230">
    <property type="term" value="P:TMP biosynthetic process"/>
    <property type="evidence" value="ECO:0007669"/>
    <property type="project" value="InterPro"/>
</dbReference>
<dbReference type="Gene3D" id="3.40.50.300">
    <property type="entry name" value="P-loop containing nucleotide triphosphate hydrolases"/>
    <property type="match status" value="1"/>
</dbReference>
<dbReference type="HAMAP" id="MF_04029">
    <property type="entry name" value="HSV_KITH"/>
    <property type="match status" value="1"/>
</dbReference>
<dbReference type="InterPro" id="IPR001889">
    <property type="entry name" value="Herpes_TK"/>
</dbReference>
<dbReference type="InterPro" id="IPR013672">
    <property type="entry name" value="Herpes_TK_C"/>
</dbReference>
<dbReference type="InterPro" id="IPR027417">
    <property type="entry name" value="P-loop_NTPase"/>
</dbReference>
<dbReference type="Pfam" id="PF00693">
    <property type="entry name" value="Herpes_TK"/>
    <property type="match status" value="1"/>
</dbReference>
<dbReference type="Pfam" id="PF08465">
    <property type="entry name" value="Herpes_TK_C"/>
    <property type="match status" value="1"/>
</dbReference>
<dbReference type="SUPFAM" id="SSF52540">
    <property type="entry name" value="P-loop containing nucleoside triphosphate hydrolases"/>
    <property type="match status" value="1"/>
</dbReference>
<feature type="chain" id="PRO_0000423759" description="Thymidine kinase">
    <location>
        <begin position="1"/>
        <end position="580"/>
    </location>
</feature>
<feature type="region of interest" description="Disordered" evidence="2">
    <location>
        <begin position="1"/>
        <end position="60"/>
    </location>
</feature>
<feature type="region of interest" description="Disordered" evidence="2">
    <location>
        <begin position="133"/>
        <end position="157"/>
    </location>
</feature>
<feature type="compositionally biased region" description="Pro residues" evidence="2">
    <location>
        <begin position="137"/>
        <end position="149"/>
    </location>
</feature>
<feature type="active site" description="Proton acceptor" evidence="1">
    <location>
        <position position="287"/>
    </location>
</feature>
<feature type="binding site" evidence="1">
    <location>
        <begin position="260"/>
        <end position="267"/>
    </location>
    <ligand>
        <name>ATP</name>
        <dbReference type="ChEBI" id="CHEBI:30616"/>
    </ligand>
</feature>
<feature type="binding site" evidence="1">
    <location>
        <position position="325"/>
    </location>
    <ligand>
        <name>substrate</name>
    </ligand>
</feature>
<feature type="binding site" evidence="1">
    <location>
        <position position="415"/>
    </location>
    <ligand>
        <name>ATP</name>
        <dbReference type="ChEBI" id="CHEBI:30616"/>
    </ligand>
</feature>
<feature type="binding site" evidence="1">
    <location>
        <position position="421"/>
    </location>
    <ligand>
        <name>substrate</name>
    </ligand>
</feature>
<gene>
    <name evidence="1" type="primary">TK</name>
    <name type="ordered locus">ORF21</name>
</gene>
<organism>
    <name type="scientific">Human herpesvirus 8 type P (isolate GK18)</name>
    <name type="common">HHV-8</name>
    <name type="synonym">Kaposi's sarcoma-associated herpesvirus</name>
    <dbReference type="NCBI Taxonomy" id="868565"/>
    <lineage>
        <taxon>Viruses</taxon>
        <taxon>Duplodnaviria</taxon>
        <taxon>Heunggongvirae</taxon>
        <taxon>Peploviricota</taxon>
        <taxon>Herviviricetes</taxon>
        <taxon>Herpesvirales</taxon>
        <taxon>Orthoherpesviridae</taxon>
        <taxon>Gammaherpesvirinae</taxon>
        <taxon>Rhadinovirus</taxon>
        <taxon>Rhadinovirus humangamma8</taxon>
        <taxon>Human herpesvirus 8</taxon>
    </lineage>
</organism>
<comment type="function">
    <text evidence="1">Catalyzes the transfer of the gamma-phospho group of ATP to thymidine to generate dTMP in the salvage pathway of pyrimidine synthesis. The dTMP serves as a substrate for DNA polymerase during viral DNA replication. Allows the virus to be reactivated and to grow in non-proliferative cells lacking a high concentration of phosphorylated nucleic acid precursors.</text>
</comment>
<comment type="catalytic activity">
    <reaction evidence="1">
        <text>thymidine + ATP = dTMP + ADP + H(+)</text>
        <dbReference type="Rhea" id="RHEA:19129"/>
        <dbReference type="ChEBI" id="CHEBI:15378"/>
        <dbReference type="ChEBI" id="CHEBI:17748"/>
        <dbReference type="ChEBI" id="CHEBI:30616"/>
        <dbReference type="ChEBI" id="CHEBI:63528"/>
        <dbReference type="ChEBI" id="CHEBI:456216"/>
        <dbReference type="EC" id="2.7.1.21"/>
    </reaction>
</comment>
<comment type="subunit">
    <text evidence="1">Homodimer.</text>
</comment>
<comment type="similarity">
    <text evidence="1">Belongs to the herpesviridae thymidine kinase family.</text>
</comment>
<keyword id="KW-0067">ATP-binding</keyword>
<keyword id="KW-0237">DNA synthesis</keyword>
<keyword id="KW-0244">Early protein</keyword>
<keyword id="KW-0418">Kinase</keyword>
<keyword id="KW-0547">Nucleotide-binding</keyword>
<keyword id="KW-1185">Reference proteome</keyword>
<keyword id="KW-0808">Transferase</keyword>
<name>KITH_HHV8P</name>
<accession>F5HB62</accession>
<reference key="1">
    <citation type="journal article" date="1999" name="J. Virol.">
        <title>Identification of a spliced gene from Kaposi's sarcoma-associated herpesvirus encoding a protein with similarities to latent membrane proteins 1 and 2A of Epstein-Barr virus.</title>
        <authorList>
            <person name="Glenn M."/>
            <person name="Rainbow L."/>
            <person name="Aurade F."/>
            <person name="Davison A."/>
            <person name="Schulz T.F."/>
        </authorList>
    </citation>
    <scope>NUCLEOTIDE SEQUENCE [LARGE SCALE GENOMIC DNA]</scope>
</reference>
<reference key="2">
    <citation type="journal article" date="2006" name="J. Gen. Virol.">
        <title>Kaposi's sarcoma-associated herpesvirus immune modulation: an overview.</title>
        <authorList>
            <person name="Rezaee S.A.R."/>
            <person name="Cunningham C."/>
            <person name="Davison A.J."/>
            <person name="Blackbourn D.J."/>
        </authorList>
    </citation>
    <scope>NUCLEOTIDE SEQUENCE [LARGE SCALE GENOMIC DNA]</scope>
</reference>
<proteinExistence type="inferred from homology"/>
<sequence length="580" mass="64537">MAEGGFGADSVGRGGEKASVTRGGRWDLGSSDDESSTSTTSTDMDDLPEERKPLTGKSVKTSYIYDVPTVPTSKPWHLMHDNSLYATPRFPPRPLIRHPSEKGSIFASRLSATDDDSGDYAPMDRFAFQSPRVCGRPPLPPPNHPPPATRPADASMGDVGWADLQGLKRTPKGFLKTSTKGGSLKARGRDVGDRLRDGGFAFSPRGVKSAIGQNIKSWLGIGESSATAVPVTTQLMVPVHLIRTPVTVDYRNVYLLYLEGVMGVGKSTLVNAVCGILPQERVTSFPEPMVYWTRAFTDCYKEISHLMKSGKAGDPLTSAKIYSCQNKFSLPFRTNATAILRMMQPWNVGGGSGRGTHWCVFDRHLLSPAVVFPLMHLKHGRLSFDHFFQLLSIFRATEGDVVAILTLSSAESLRRVRARGRKNDGTVEQNYIRELAWAYHAVYCSWIMLQYITVEQMVQLCVQTTNIPEICFRSVRLAHKEETLKNLHEQSMLPMITGVLDPVRHHPVVIELCFCFFTELRKLQFIVADADKFHDDVCGLWTEIYRQILSNPAIKPRAINWPALESQSKAVNHLEETCRV</sequence>
<organismHost>
    <name type="scientific">Homo sapiens</name>
    <name type="common">Human</name>
    <dbReference type="NCBI Taxonomy" id="9606"/>
</organismHost>